<dbReference type="EC" id="2.7.7.38" evidence="1"/>
<dbReference type="EMBL" id="FM209186">
    <property type="protein sequence ID" value="CAW26810.1"/>
    <property type="molecule type" value="Genomic_DNA"/>
</dbReference>
<dbReference type="RefSeq" id="WP_003091155.1">
    <property type="nucleotide sequence ID" value="NC_011770.1"/>
</dbReference>
<dbReference type="SMR" id="B7V149"/>
<dbReference type="KEGG" id="pag:PLES_20831"/>
<dbReference type="HOGENOM" id="CLU_065038_1_0_6"/>
<dbReference type="UniPathway" id="UPA00030"/>
<dbReference type="UniPathway" id="UPA00358">
    <property type="reaction ID" value="UER00476"/>
</dbReference>
<dbReference type="GO" id="GO:0005829">
    <property type="term" value="C:cytosol"/>
    <property type="evidence" value="ECO:0007669"/>
    <property type="project" value="TreeGrafter"/>
</dbReference>
<dbReference type="GO" id="GO:0008690">
    <property type="term" value="F:3-deoxy-manno-octulosonate cytidylyltransferase activity"/>
    <property type="evidence" value="ECO:0007669"/>
    <property type="project" value="UniProtKB-UniRule"/>
</dbReference>
<dbReference type="GO" id="GO:0033468">
    <property type="term" value="P:CMP-keto-3-deoxy-D-manno-octulosonic acid biosynthetic process"/>
    <property type="evidence" value="ECO:0007669"/>
    <property type="project" value="UniProtKB-UniRule"/>
</dbReference>
<dbReference type="GO" id="GO:0009103">
    <property type="term" value="P:lipopolysaccharide biosynthetic process"/>
    <property type="evidence" value="ECO:0007669"/>
    <property type="project" value="UniProtKB-UniRule"/>
</dbReference>
<dbReference type="CDD" id="cd02517">
    <property type="entry name" value="CMP-KDO-Synthetase"/>
    <property type="match status" value="1"/>
</dbReference>
<dbReference type="FunFam" id="3.90.550.10:FF:000011">
    <property type="entry name" value="3-deoxy-manno-octulosonate cytidylyltransferase"/>
    <property type="match status" value="1"/>
</dbReference>
<dbReference type="Gene3D" id="3.90.550.10">
    <property type="entry name" value="Spore Coat Polysaccharide Biosynthesis Protein SpsA, Chain A"/>
    <property type="match status" value="1"/>
</dbReference>
<dbReference type="HAMAP" id="MF_00057">
    <property type="entry name" value="KdsB"/>
    <property type="match status" value="1"/>
</dbReference>
<dbReference type="InterPro" id="IPR003329">
    <property type="entry name" value="Cytidylyl_trans"/>
</dbReference>
<dbReference type="InterPro" id="IPR004528">
    <property type="entry name" value="KdsB"/>
</dbReference>
<dbReference type="InterPro" id="IPR029044">
    <property type="entry name" value="Nucleotide-diphossugar_trans"/>
</dbReference>
<dbReference type="NCBIfam" id="TIGR00466">
    <property type="entry name" value="kdsB"/>
    <property type="match status" value="1"/>
</dbReference>
<dbReference type="NCBIfam" id="NF003950">
    <property type="entry name" value="PRK05450.1-3"/>
    <property type="match status" value="1"/>
</dbReference>
<dbReference type="NCBIfam" id="NF003952">
    <property type="entry name" value="PRK05450.1-5"/>
    <property type="match status" value="1"/>
</dbReference>
<dbReference type="NCBIfam" id="NF009905">
    <property type="entry name" value="PRK13368.1"/>
    <property type="match status" value="1"/>
</dbReference>
<dbReference type="PANTHER" id="PTHR42866">
    <property type="entry name" value="3-DEOXY-MANNO-OCTULOSONATE CYTIDYLYLTRANSFERASE"/>
    <property type="match status" value="1"/>
</dbReference>
<dbReference type="PANTHER" id="PTHR42866:SF2">
    <property type="entry name" value="3-DEOXY-MANNO-OCTULOSONATE CYTIDYLYLTRANSFERASE, MITOCHONDRIAL"/>
    <property type="match status" value="1"/>
</dbReference>
<dbReference type="Pfam" id="PF02348">
    <property type="entry name" value="CTP_transf_3"/>
    <property type="match status" value="1"/>
</dbReference>
<dbReference type="SUPFAM" id="SSF53448">
    <property type="entry name" value="Nucleotide-diphospho-sugar transferases"/>
    <property type="match status" value="1"/>
</dbReference>
<sequence length="254" mass="27633">MTQAFTVVIPARYASTRLPGKPLQDIAGQPMIQRVWNQARKSAASRVVVATDDERILAACQGFGAEALLTRAEHNSGTDRLEEVASRLGLASDAIVVNVQGDEPLIPPALIDQVAANLAAHPEAAIATLAEPIHEVSALFNPNVVKVATDIDGLALTFSRAPLPWARDAFARDRDSLPEGVPYRRHIGIYAYRVGFLADFVAWGPCWLENAESLEQLRALWHGVRIHVADARETMLPGVDTPEDLERVRRVLGG</sequence>
<protein>
    <recommendedName>
        <fullName evidence="1">3-deoxy-manno-octulosonate cytidylyltransferase</fullName>
        <ecNumber evidence="1">2.7.7.38</ecNumber>
    </recommendedName>
    <alternativeName>
        <fullName evidence="1">CMP-2-keto-3-deoxyoctulosonic acid synthase</fullName>
        <shortName evidence="1">CKS</shortName>
        <shortName evidence="1">CMP-KDO synthase</shortName>
    </alternativeName>
</protein>
<accession>B7V149</accession>
<keyword id="KW-0963">Cytoplasm</keyword>
<keyword id="KW-0448">Lipopolysaccharide biosynthesis</keyword>
<keyword id="KW-0548">Nucleotidyltransferase</keyword>
<keyword id="KW-0808">Transferase</keyword>
<name>KDSB_PSEA8</name>
<proteinExistence type="inferred from homology"/>
<reference key="1">
    <citation type="journal article" date="2009" name="Genome Res.">
        <title>Newly introduced genomic prophage islands are critical determinants of in vivo competitiveness in the Liverpool epidemic strain of Pseudomonas aeruginosa.</title>
        <authorList>
            <person name="Winstanley C."/>
            <person name="Langille M.G.I."/>
            <person name="Fothergill J.L."/>
            <person name="Kukavica-Ibrulj I."/>
            <person name="Paradis-Bleau C."/>
            <person name="Sanschagrin F."/>
            <person name="Thomson N.R."/>
            <person name="Winsor G.L."/>
            <person name="Quail M.A."/>
            <person name="Lennard N."/>
            <person name="Bignell A."/>
            <person name="Clarke L."/>
            <person name="Seeger K."/>
            <person name="Saunders D."/>
            <person name="Harris D."/>
            <person name="Parkhill J."/>
            <person name="Hancock R.E.W."/>
            <person name="Brinkman F.S.L."/>
            <person name="Levesque R.C."/>
        </authorList>
    </citation>
    <scope>NUCLEOTIDE SEQUENCE [LARGE SCALE GENOMIC DNA]</scope>
    <source>
        <strain>LESB58</strain>
    </source>
</reference>
<organism>
    <name type="scientific">Pseudomonas aeruginosa (strain LESB58)</name>
    <dbReference type="NCBI Taxonomy" id="557722"/>
    <lineage>
        <taxon>Bacteria</taxon>
        <taxon>Pseudomonadati</taxon>
        <taxon>Pseudomonadota</taxon>
        <taxon>Gammaproteobacteria</taxon>
        <taxon>Pseudomonadales</taxon>
        <taxon>Pseudomonadaceae</taxon>
        <taxon>Pseudomonas</taxon>
    </lineage>
</organism>
<evidence type="ECO:0000255" key="1">
    <source>
        <dbReference type="HAMAP-Rule" id="MF_00057"/>
    </source>
</evidence>
<feature type="chain" id="PRO_1000190747" description="3-deoxy-manno-octulosonate cytidylyltransferase">
    <location>
        <begin position="1"/>
        <end position="254"/>
    </location>
</feature>
<comment type="function">
    <text evidence="1">Activates KDO (a required 8-carbon sugar) for incorporation into bacterial lipopolysaccharide in Gram-negative bacteria.</text>
</comment>
<comment type="catalytic activity">
    <reaction evidence="1">
        <text>3-deoxy-alpha-D-manno-oct-2-ulosonate + CTP = CMP-3-deoxy-beta-D-manno-octulosonate + diphosphate</text>
        <dbReference type="Rhea" id="RHEA:23448"/>
        <dbReference type="ChEBI" id="CHEBI:33019"/>
        <dbReference type="ChEBI" id="CHEBI:37563"/>
        <dbReference type="ChEBI" id="CHEBI:85986"/>
        <dbReference type="ChEBI" id="CHEBI:85987"/>
        <dbReference type="EC" id="2.7.7.38"/>
    </reaction>
</comment>
<comment type="pathway">
    <text evidence="1">Nucleotide-sugar biosynthesis; CMP-3-deoxy-D-manno-octulosonate biosynthesis; CMP-3-deoxy-D-manno-octulosonate from 3-deoxy-D-manno-octulosonate and CTP: step 1/1.</text>
</comment>
<comment type="pathway">
    <text evidence="1">Bacterial outer membrane biogenesis; lipopolysaccharide biosynthesis.</text>
</comment>
<comment type="subcellular location">
    <subcellularLocation>
        <location evidence="1">Cytoplasm</location>
    </subcellularLocation>
</comment>
<comment type="similarity">
    <text evidence="1">Belongs to the KdsB family.</text>
</comment>
<gene>
    <name evidence="1" type="primary">kdsB</name>
    <name type="ordered locus">PLES_20831</name>
</gene>